<accession>A4IH82</accession>
<sequence length="373" mass="41626">MEGKEGPSCEVRLPTPGAEREGPIHPELGAFGETASNTIKLSESSNDGKKEEIEEELDPRIQEELERLNQASEEINLLELQLDEARTAYRRILTESARRLNGLATQLGACIDKARPYYEARRLAKEAQQDTHSAALRYERAVSMHAAAREMVFVAEQGVTADKNRLDPTWQEMLNHATCKVNEAEEERLRSEFEHQRVTRQCHEAEAKVQTLQKSLKRFIIKSRPYFELKSQLNTILEEHKSRVTSLENSVAQAKLRYSGTLRNLEQISEEIHARRTQSSLLSQRAPPLGAEAPPSVKDGETGPPADTVSLLSLQTIASDLQKSDSVEHLRDLTDVTSLDGRETGAVECGGSRERGGDRGTGGAFRHHRSVSL</sequence>
<protein>
    <recommendedName>
        <fullName>SH3 domain-binding protein 5-like</fullName>
        <shortName>SH3BP-5-like</shortName>
    </recommendedName>
</protein>
<gene>
    <name type="primary">sh3bp5l</name>
</gene>
<organism>
    <name type="scientific">Xenopus tropicalis</name>
    <name type="common">Western clawed frog</name>
    <name type="synonym">Silurana tropicalis</name>
    <dbReference type="NCBI Taxonomy" id="8364"/>
    <lineage>
        <taxon>Eukaryota</taxon>
        <taxon>Metazoa</taxon>
        <taxon>Chordata</taxon>
        <taxon>Craniata</taxon>
        <taxon>Vertebrata</taxon>
        <taxon>Euteleostomi</taxon>
        <taxon>Amphibia</taxon>
        <taxon>Batrachia</taxon>
        <taxon>Anura</taxon>
        <taxon>Pipoidea</taxon>
        <taxon>Pipidae</taxon>
        <taxon>Xenopodinae</taxon>
        <taxon>Xenopus</taxon>
        <taxon>Silurana</taxon>
    </lineage>
</organism>
<comment type="function">
    <text evidence="1">Functions as a guanine nucleotide exchange factor (GEF) for rab11a.</text>
</comment>
<comment type="similarity">
    <text evidence="4">Belongs to the SH3BP5 family.</text>
</comment>
<keyword id="KW-0175">Coiled coil</keyword>
<keyword id="KW-0344">Guanine-nucleotide releasing factor</keyword>
<keyword id="KW-1185">Reference proteome</keyword>
<dbReference type="EMBL" id="BC135413">
    <property type="protein sequence ID" value="AAI35414.1"/>
    <property type="molecule type" value="mRNA"/>
</dbReference>
<dbReference type="RefSeq" id="NP_001093720.1">
    <property type="nucleotide sequence ID" value="NM_001100250.1"/>
</dbReference>
<dbReference type="RefSeq" id="XP_012823298.1">
    <property type="nucleotide sequence ID" value="XM_012967844.3"/>
</dbReference>
<dbReference type="RefSeq" id="XP_012823299.1">
    <property type="nucleotide sequence ID" value="XM_012967845.3"/>
</dbReference>
<dbReference type="RefSeq" id="XP_012823300.1">
    <property type="nucleotide sequence ID" value="XM_012967846.3"/>
</dbReference>
<dbReference type="SMR" id="A4IH82"/>
<dbReference type="FunCoup" id="A4IH82">
    <property type="interactions" value="1756"/>
</dbReference>
<dbReference type="STRING" id="8364.ENSXETP00000046707"/>
<dbReference type="PaxDb" id="8364-ENSXETP00000043899"/>
<dbReference type="GeneID" id="100101740"/>
<dbReference type="KEGG" id="xtr:100101740"/>
<dbReference type="AGR" id="Xenbase:XB-GENE-920564"/>
<dbReference type="CTD" id="80851"/>
<dbReference type="Xenbase" id="XB-GENE-920564">
    <property type="gene designation" value="sh3bp5l"/>
</dbReference>
<dbReference type="eggNOG" id="KOG2008">
    <property type="taxonomic scope" value="Eukaryota"/>
</dbReference>
<dbReference type="HOGENOM" id="CLU_043711_0_0_1"/>
<dbReference type="InParanoid" id="A4IH82"/>
<dbReference type="OMA" id="QISAEIH"/>
<dbReference type="OrthoDB" id="446789at2759"/>
<dbReference type="PhylomeDB" id="A4IH82"/>
<dbReference type="Proteomes" id="UP000008143">
    <property type="component" value="Chromosome 8"/>
</dbReference>
<dbReference type="Bgee" id="ENSXETG00000020349">
    <property type="expression patterns" value="Expressed in skeletal muscle tissue and 12 other cell types or tissues"/>
</dbReference>
<dbReference type="ExpressionAtlas" id="A4IH82">
    <property type="expression patterns" value="baseline and differential"/>
</dbReference>
<dbReference type="GO" id="GO:0005085">
    <property type="term" value="F:guanyl-nucleotide exchange factor activity"/>
    <property type="evidence" value="ECO:0000250"/>
    <property type="project" value="UniProtKB"/>
</dbReference>
<dbReference type="GO" id="GO:0035556">
    <property type="term" value="P:intracellular signal transduction"/>
    <property type="evidence" value="ECO:0007669"/>
    <property type="project" value="InterPro"/>
</dbReference>
<dbReference type="InterPro" id="IPR007940">
    <property type="entry name" value="SH3BP5"/>
</dbReference>
<dbReference type="PANTHER" id="PTHR19423">
    <property type="entry name" value="SH3 DOMAIN-BINDING PROTEIN 5"/>
    <property type="match status" value="1"/>
</dbReference>
<dbReference type="PANTHER" id="PTHR19423:SF8">
    <property type="entry name" value="SH3 DOMAIN-BINDING PROTEIN 5-LIKE"/>
    <property type="match status" value="1"/>
</dbReference>
<dbReference type="Pfam" id="PF05276">
    <property type="entry name" value="SH3BP5"/>
    <property type="match status" value="1"/>
</dbReference>
<feature type="chain" id="PRO_0000317512" description="SH3 domain-binding protein 5-like">
    <location>
        <begin position="1"/>
        <end position="373"/>
    </location>
</feature>
<feature type="region of interest" description="Disordered" evidence="3">
    <location>
        <begin position="1"/>
        <end position="53"/>
    </location>
</feature>
<feature type="region of interest" description="Disordered" evidence="3">
    <location>
        <begin position="276"/>
        <end position="305"/>
    </location>
</feature>
<feature type="region of interest" description="Disordered" evidence="3">
    <location>
        <begin position="344"/>
        <end position="373"/>
    </location>
</feature>
<feature type="coiled-coil region" evidence="2">
    <location>
        <begin position="55"/>
        <end position="98"/>
    </location>
</feature>
<feature type="coiled-coil region" evidence="2">
    <location>
        <begin position="170"/>
        <end position="272"/>
    </location>
</feature>
<feature type="compositionally biased region" description="Polar residues" evidence="3">
    <location>
        <begin position="34"/>
        <end position="45"/>
    </location>
</feature>
<feature type="compositionally biased region" description="Basic and acidic residues" evidence="3">
    <location>
        <begin position="344"/>
        <end position="358"/>
    </location>
</feature>
<reference key="1">
    <citation type="submission" date="2007-03" db="EMBL/GenBank/DDBJ databases">
        <authorList>
            <consortium name="NIH - Xenopus Gene Collection (XGC) project"/>
        </authorList>
    </citation>
    <scope>NUCLEOTIDE SEQUENCE [LARGE SCALE MRNA]</scope>
    <source>
        <tissue>Embryo</tissue>
    </source>
</reference>
<proteinExistence type="evidence at transcript level"/>
<name>3BP5L_XENTR</name>
<evidence type="ECO:0000250" key="1">
    <source>
        <dbReference type="UniProtKB" id="Q7L8J4"/>
    </source>
</evidence>
<evidence type="ECO:0000255" key="2"/>
<evidence type="ECO:0000256" key="3">
    <source>
        <dbReference type="SAM" id="MobiDB-lite"/>
    </source>
</evidence>
<evidence type="ECO:0000305" key="4"/>